<dbReference type="EMBL" id="CP000672">
    <property type="protein sequence ID" value="ABR00386.1"/>
    <property type="molecule type" value="Genomic_DNA"/>
</dbReference>
<dbReference type="SMR" id="A5UHY0"/>
<dbReference type="KEGG" id="hiq:CGSHiGG_07655"/>
<dbReference type="HOGENOM" id="CLU_147939_0_0_6"/>
<dbReference type="Proteomes" id="UP000001990">
    <property type="component" value="Chromosome"/>
</dbReference>
<dbReference type="GO" id="GO:0005737">
    <property type="term" value="C:cytoplasm"/>
    <property type="evidence" value="ECO:0007669"/>
    <property type="project" value="UniProtKB-SubCell"/>
</dbReference>
<dbReference type="GO" id="GO:0003700">
    <property type="term" value="F:DNA-binding transcription factor activity"/>
    <property type="evidence" value="ECO:0007669"/>
    <property type="project" value="InterPro"/>
</dbReference>
<dbReference type="GO" id="GO:0043565">
    <property type="term" value="F:sequence-specific DNA binding"/>
    <property type="evidence" value="ECO:0007669"/>
    <property type="project" value="InterPro"/>
</dbReference>
<dbReference type="GO" id="GO:0045892">
    <property type="term" value="P:negative regulation of DNA-templated transcription"/>
    <property type="evidence" value="ECO:0007669"/>
    <property type="project" value="UniProtKB-UniRule"/>
</dbReference>
<dbReference type="Gene3D" id="1.10.1270.10">
    <property type="entry name" value="TrpR-like"/>
    <property type="match status" value="1"/>
</dbReference>
<dbReference type="HAMAP" id="MF_00475">
    <property type="entry name" value="Trp_repressor"/>
    <property type="match status" value="1"/>
</dbReference>
<dbReference type="InterPro" id="IPR000831">
    <property type="entry name" value="Trp_repress"/>
</dbReference>
<dbReference type="InterPro" id="IPR013335">
    <property type="entry name" value="Trp_repress_bac"/>
</dbReference>
<dbReference type="InterPro" id="IPR010921">
    <property type="entry name" value="Trp_repressor/repl_initiator"/>
</dbReference>
<dbReference type="InterPro" id="IPR038116">
    <property type="entry name" value="TrpR-like_sf"/>
</dbReference>
<dbReference type="NCBIfam" id="TIGR01321">
    <property type="entry name" value="TrpR"/>
    <property type="match status" value="1"/>
</dbReference>
<dbReference type="PANTHER" id="PTHR38025">
    <property type="entry name" value="TRP OPERON REPRESSOR"/>
    <property type="match status" value="1"/>
</dbReference>
<dbReference type="PANTHER" id="PTHR38025:SF1">
    <property type="entry name" value="TRP OPERON REPRESSOR"/>
    <property type="match status" value="1"/>
</dbReference>
<dbReference type="Pfam" id="PF01371">
    <property type="entry name" value="Trp_repressor"/>
    <property type="match status" value="1"/>
</dbReference>
<dbReference type="PIRSF" id="PIRSF003196">
    <property type="entry name" value="Trp_repressor"/>
    <property type="match status" value="1"/>
</dbReference>
<dbReference type="SUPFAM" id="SSF48295">
    <property type="entry name" value="TrpR-like"/>
    <property type="match status" value="1"/>
</dbReference>
<accession>A5UHY0</accession>
<gene>
    <name evidence="1" type="primary">trpR</name>
    <name type="ordered locus">CGSHiGG_07655</name>
</gene>
<comment type="function">
    <text evidence="1">This protein is an aporepressor. When complexed with L-tryptophan it binds the operator region of the trp operon and prevents the initiation of transcription.</text>
</comment>
<comment type="subunit">
    <text evidence="1">Homodimer.</text>
</comment>
<comment type="subcellular location">
    <subcellularLocation>
        <location evidence="1">Cytoplasm</location>
    </subcellularLocation>
</comment>
<comment type="similarity">
    <text evidence="1">Belongs to the TrpR family.</text>
</comment>
<feature type="chain" id="PRO_1000014044" description="Trp operon repressor homolog">
    <location>
        <begin position="1"/>
        <end position="101"/>
    </location>
</feature>
<feature type="DNA-binding region" evidence="1">
    <location>
        <begin position="59"/>
        <end position="82"/>
    </location>
</feature>
<reference key="1">
    <citation type="journal article" date="2007" name="Genome Biol.">
        <title>Characterization and modeling of the Haemophilus influenzae core and supragenomes based on the complete genomic sequences of Rd and 12 clinical nontypeable strains.</title>
        <authorList>
            <person name="Hogg J.S."/>
            <person name="Hu F.Z."/>
            <person name="Janto B."/>
            <person name="Boissy R."/>
            <person name="Hayes J."/>
            <person name="Keefe R."/>
            <person name="Post J.C."/>
            <person name="Ehrlich G.D."/>
        </authorList>
    </citation>
    <scope>NUCLEOTIDE SEQUENCE [LARGE SCALE GENOMIC DNA]</scope>
    <source>
        <strain>PittGG</strain>
    </source>
</reference>
<organism>
    <name type="scientific">Haemophilus influenzae (strain PittGG)</name>
    <dbReference type="NCBI Taxonomy" id="374931"/>
    <lineage>
        <taxon>Bacteria</taxon>
        <taxon>Pseudomonadati</taxon>
        <taxon>Pseudomonadota</taxon>
        <taxon>Gammaproteobacteria</taxon>
        <taxon>Pasteurellales</taxon>
        <taxon>Pasteurellaceae</taxon>
        <taxon>Haemophilus</taxon>
    </lineage>
</organism>
<sequence>MYISRNLEQWNAFLQMLKIAFEENKAQEFLTLLLTADERDAVGLRLQIVSQLIDKNMPQREIQQNLNTSAATITRGSNMIKTMDPDFMQWMKQHLDLIEKN</sequence>
<evidence type="ECO:0000255" key="1">
    <source>
        <dbReference type="HAMAP-Rule" id="MF_00475"/>
    </source>
</evidence>
<protein>
    <recommendedName>
        <fullName evidence="1">Trp operon repressor homolog</fullName>
    </recommendedName>
</protein>
<name>TRPR_HAEIG</name>
<keyword id="KW-0963">Cytoplasm</keyword>
<keyword id="KW-0238">DNA-binding</keyword>
<keyword id="KW-0678">Repressor</keyword>
<keyword id="KW-0804">Transcription</keyword>
<keyword id="KW-0805">Transcription regulation</keyword>
<proteinExistence type="inferred from homology"/>